<gene>
    <name evidence="1" type="primary">rpsQ</name>
    <name type="ordered locus">Aflv_0114</name>
</gene>
<feature type="chain" id="PRO_1000143216" description="Small ribosomal subunit protein uS17">
    <location>
        <begin position="1"/>
        <end position="87"/>
    </location>
</feature>
<evidence type="ECO:0000255" key="1">
    <source>
        <dbReference type="HAMAP-Rule" id="MF_01345"/>
    </source>
</evidence>
<evidence type="ECO:0000305" key="2"/>
<protein>
    <recommendedName>
        <fullName evidence="1">Small ribosomal subunit protein uS17</fullName>
    </recommendedName>
    <alternativeName>
        <fullName evidence="2">30S ribosomal protein S17</fullName>
    </alternativeName>
</protein>
<accession>B7GJ76</accession>
<dbReference type="EMBL" id="CP000922">
    <property type="protein sequence ID" value="ACJ32498.1"/>
    <property type="molecule type" value="Genomic_DNA"/>
</dbReference>
<dbReference type="RefSeq" id="WP_003397674.1">
    <property type="nucleotide sequence ID" value="NC_011567.1"/>
</dbReference>
<dbReference type="SMR" id="B7GJ76"/>
<dbReference type="STRING" id="491915.Aflv_0114"/>
<dbReference type="GeneID" id="7036313"/>
<dbReference type="KEGG" id="afl:Aflv_0114"/>
<dbReference type="eggNOG" id="COG0186">
    <property type="taxonomic scope" value="Bacteria"/>
</dbReference>
<dbReference type="HOGENOM" id="CLU_073626_1_0_9"/>
<dbReference type="Proteomes" id="UP000000742">
    <property type="component" value="Chromosome"/>
</dbReference>
<dbReference type="GO" id="GO:0022627">
    <property type="term" value="C:cytosolic small ribosomal subunit"/>
    <property type="evidence" value="ECO:0007669"/>
    <property type="project" value="TreeGrafter"/>
</dbReference>
<dbReference type="GO" id="GO:0019843">
    <property type="term" value="F:rRNA binding"/>
    <property type="evidence" value="ECO:0007669"/>
    <property type="project" value="UniProtKB-UniRule"/>
</dbReference>
<dbReference type="GO" id="GO:0003735">
    <property type="term" value="F:structural constituent of ribosome"/>
    <property type="evidence" value="ECO:0007669"/>
    <property type="project" value="InterPro"/>
</dbReference>
<dbReference type="GO" id="GO:0006412">
    <property type="term" value="P:translation"/>
    <property type="evidence" value="ECO:0007669"/>
    <property type="project" value="UniProtKB-UniRule"/>
</dbReference>
<dbReference type="CDD" id="cd00364">
    <property type="entry name" value="Ribosomal_uS17"/>
    <property type="match status" value="1"/>
</dbReference>
<dbReference type="FunFam" id="2.40.50.140:FF:000026">
    <property type="entry name" value="30S ribosomal protein S17"/>
    <property type="match status" value="1"/>
</dbReference>
<dbReference type="Gene3D" id="2.40.50.140">
    <property type="entry name" value="Nucleic acid-binding proteins"/>
    <property type="match status" value="1"/>
</dbReference>
<dbReference type="HAMAP" id="MF_01345_B">
    <property type="entry name" value="Ribosomal_uS17_B"/>
    <property type="match status" value="1"/>
</dbReference>
<dbReference type="InterPro" id="IPR012340">
    <property type="entry name" value="NA-bd_OB-fold"/>
</dbReference>
<dbReference type="InterPro" id="IPR000266">
    <property type="entry name" value="Ribosomal_uS17"/>
</dbReference>
<dbReference type="InterPro" id="IPR019984">
    <property type="entry name" value="Ribosomal_uS17_bact/chlr"/>
</dbReference>
<dbReference type="InterPro" id="IPR019979">
    <property type="entry name" value="Ribosomal_uS17_CS"/>
</dbReference>
<dbReference type="NCBIfam" id="NF004123">
    <property type="entry name" value="PRK05610.1"/>
    <property type="match status" value="1"/>
</dbReference>
<dbReference type="NCBIfam" id="TIGR03635">
    <property type="entry name" value="uS17_bact"/>
    <property type="match status" value="1"/>
</dbReference>
<dbReference type="PANTHER" id="PTHR10744">
    <property type="entry name" value="40S RIBOSOMAL PROTEIN S11 FAMILY MEMBER"/>
    <property type="match status" value="1"/>
</dbReference>
<dbReference type="PANTHER" id="PTHR10744:SF1">
    <property type="entry name" value="SMALL RIBOSOMAL SUBUNIT PROTEIN US17M"/>
    <property type="match status" value="1"/>
</dbReference>
<dbReference type="Pfam" id="PF00366">
    <property type="entry name" value="Ribosomal_S17"/>
    <property type="match status" value="1"/>
</dbReference>
<dbReference type="PRINTS" id="PR00973">
    <property type="entry name" value="RIBOSOMALS17"/>
</dbReference>
<dbReference type="SUPFAM" id="SSF50249">
    <property type="entry name" value="Nucleic acid-binding proteins"/>
    <property type="match status" value="1"/>
</dbReference>
<dbReference type="PROSITE" id="PS00056">
    <property type="entry name" value="RIBOSOMAL_S17"/>
    <property type="match status" value="1"/>
</dbReference>
<reference key="1">
    <citation type="journal article" date="2008" name="Genome Biol.">
        <title>Encapsulated in silica: genome, proteome and physiology of the thermophilic bacterium Anoxybacillus flavithermus WK1.</title>
        <authorList>
            <person name="Saw J.H."/>
            <person name="Mountain B.W."/>
            <person name="Feng L."/>
            <person name="Omelchenko M.V."/>
            <person name="Hou S."/>
            <person name="Saito J.A."/>
            <person name="Stott M.B."/>
            <person name="Li D."/>
            <person name="Zhao G."/>
            <person name="Wu J."/>
            <person name="Galperin M.Y."/>
            <person name="Koonin E.V."/>
            <person name="Makarova K.S."/>
            <person name="Wolf Y.I."/>
            <person name="Rigden D.J."/>
            <person name="Dunfield P.F."/>
            <person name="Wang L."/>
            <person name="Alam M."/>
        </authorList>
    </citation>
    <scope>NUCLEOTIDE SEQUENCE [LARGE SCALE GENOMIC DNA]</scope>
    <source>
        <strain>DSM 21510 / WK1</strain>
    </source>
</reference>
<organism>
    <name type="scientific">Anoxybacillus flavithermus (strain DSM 21510 / WK1)</name>
    <dbReference type="NCBI Taxonomy" id="491915"/>
    <lineage>
        <taxon>Bacteria</taxon>
        <taxon>Bacillati</taxon>
        <taxon>Bacillota</taxon>
        <taxon>Bacilli</taxon>
        <taxon>Bacillales</taxon>
        <taxon>Anoxybacillaceae</taxon>
        <taxon>Anoxybacillus</taxon>
    </lineage>
</organism>
<name>RS17_ANOFW</name>
<comment type="function">
    <text evidence="1">One of the primary rRNA binding proteins, it binds specifically to the 5'-end of 16S ribosomal RNA.</text>
</comment>
<comment type="subunit">
    <text evidence="1">Part of the 30S ribosomal subunit.</text>
</comment>
<comment type="similarity">
    <text evidence="1">Belongs to the universal ribosomal protein uS17 family.</text>
</comment>
<sequence length="87" mass="10074">MSERNNRKVLVGRVVSDKMDKTITVLVETYKKHPLYGKRVKYSKKYKAHDENNVAKVGDIVKIMETRPLSATKRFRLVEVVEKAVIV</sequence>
<proteinExistence type="inferred from homology"/>
<keyword id="KW-0687">Ribonucleoprotein</keyword>
<keyword id="KW-0689">Ribosomal protein</keyword>
<keyword id="KW-0694">RNA-binding</keyword>
<keyword id="KW-0699">rRNA-binding</keyword>